<dbReference type="EC" id="3.6.1.9" evidence="1"/>
<dbReference type="EMBL" id="CR954246">
    <property type="protein sequence ID" value="CAI87727.1"/>
    <property type="molecule type" value="Genomic_DNA"/>
</dbReference>
<dbReference type="SMR" id="Q3IFH5"/>
<dbReference type="STRING" id="326442.PSHAa2679"/>
<dbReference type="KEGG" id="pha:PSHAa2679"/>
<dbReference type="PATRIC" id="fig|326442.8.peg.2588"/>
<dbReference type="eggNOG" id="COG0424">
    <property type="taxonomic scope" value="Bacteria"/>
</dbReference>
<dbReference type="HOGENOM" id="CLU_040416_2_1_6"/>
<dbReference type="BioCyc" id="PHAL326442:PSHA_RS13175-MONOMER"/>
<dbReference type="Proteomes" id="UP000006843">
    <property type="component" value="Chromosome I"/>
</dbReference>
<dbReference type="GO" id="GO:0005737">
    <property type="term" value="C:cytoplasm"/>
    <property type="evidence" value="ECO:0007669"/>
    <property type="project" value="UniProtKB-SubCell"/>
</dbReference>
<dbReference type="GO" id="GO:0036218">
    <property type="term" value="F:dTTP diphosphatase activity"/>
    <property type="evidence" value="ECO:0007669"/>
    <property type="project" value="RHEA"/>
</dbReference>
<dbReference type="GO" id="GO:0036221">
    <property type="term" value="F:UTP diphosphatase activity"/>
    <property type="evidence" value="ECO:0007669"/>
    <property type="project" value="RHEA"/>
</dbReference>
<dbReference type="GO" id="GO:0009117">
    <property type="term" value="P:nucleotide metabolic process"/>
    <property type="evidence" value="ECO:0007669"/>
    <property type="project" value="UniProtKB-KW"/>
</dbReference>
<dbReference type="CDD" id="cd00555">
    <property type="entry name" value="Maf"/>
    <property type="match status" value="1"/>
</dbReference>
<dbReference type="Gene3D" id="3.90.950.10">
    <property type="match status" value="1"/>
</dbReference>
<dbReference type="HAMAP" id="MF_00528">
    <property type="entry name" value="Maf"/>
    <property type="match status" value="1"/>
</dbReference>
<dbReference type="InterPro" id="IPR029001">
    <property type="entry name" value="ITPase-like_fam"/>
</dbReference>
<dbReference type="InterPro" id="IPR003697">
    <property type="entry name" value="Maf-like"/>
</dbReference>
<dbReference type="NCBIfam" id="TIGR00172">
    <property type="entry name" value="maf"/>
    <property type="match status" value="1"/>
</dbReference>
<dbReference type="PANTHER" id="PTHR43213">
    <property type="entry name" value="BIFUNCTIONAL DTTP/UTP PYROPHOSPHATASE/METHYLTRANSFERASE PROTEIN-RELATED"/>
    <property type="match status" value="1"/>
</dbReference>
<dbReference type="PANTHER" id="PTHR43213:SF5">
    <property type="entry name" value="BIFUNCTIONAL DTTP_UTP PYROPHOSPHATASE_METHYLTRANSFERASE PROTEIN-RELATED"/>
    <property type="match status" value="1"/>
</dbReference>
<dbReference type="Pfam" id="PF02545">
    <property type="entry name" value="Maf"/>
    <property type="match status" value="1"/>
</dbReference>
<dbReference type="PIRSF" id="PIRSF006305">
    <property type="entry name" value="Maf"/>
    <property type="match status" value="1"/>
</dbReference>
<dbReference type="SUPFAM" id="SSF52972">
    <property type="entry name" value="ITPase-like"/>
    <property type="match status" value="1"/>
</dbReference>
<accession>Q3IFH5</accession>
<proteinExistence type="inferred from homology"/>
<protein>
    <recommendedName>
        <fullName evidence="1">dTTP/UTP pyrophosphatase</fullName>
        <shortName evidence="1">dTTPase/UTPase</shortName>
        <ecNumber evidence="1">3.6.1.9</ecNumber>
    </recommendedName>
    <alternativeName>
        <fullName evidence="1">Nucleoside triphosphate pyrophosphatase</fullName>
    </alternativeName>
    <alternativeName>
        <fullName evidence="1">Nucleotide pyrophosphatase</fullName>
        <shortName evidence="1">Nucleotide PPase</shortName>
    </alternativeName>
</protein>
<comment type="function">
    <text evidence="1">Nucleoside triphosphate pyrophosphatase that hydrolyzes dTTP and UTP. May have a dual role in cell division arrest and in preventing the incorporation of modified nucleotides into cellular nucleic acids.</text>
</comment>
<comment type="catalytic activity">
    <reaction evidence="1">
        <text>dTTP + H2O = dTMP + diphosphate + H(+)</text>
        <dbReference type="Rhea" id="RHEA:28534"/>
        <dbReference type="ChEBI" id="CHEBI:15377"/>
        <dbReference type="ChEBI" id="CHEBI:15378"/>
        <dbReference type="ChEBI" id="CHEBI:33019"/>
        <dbReference type="ChEBI" id="CHEBI:37568"/>
        <dbReference type="ChEBI" id="CHEBI:63528"/>
        <dbReference type="EC" id="3.6.1.9"/>
    </reaction>
</comment>
<comment type="catalytic activity">
    <reaction evidence="1">
        <text>UTP + H2O = UMP + diphosphate + H(+)</text>
        <dbReference type="Rhea" id="RHEA:29395"/>
        <dbReference type="ChEBI" id="CHEBI:15377"/>
        <dbReference type="ChEBI" id="CHEBI:15378"/>
        <dbReference type="ChEBI" id="CHEBI:33019"/>
        <dbReference type="ChEBI" id="CHEBI:46398"/>
        <dbReference type="ChEBI" id="CHEBI:57865"/>
        <dbReference type="EC" id="3.6.1.9"/>
    </reaction>
</comment>
<comment type="cofactor">
    <cofactor evidence="1">
        <name>a divalent metal cation</name>
        <dbReference type="ChEBI" id="CHEBI:60240"/>
    </cofactor>
</comment>
<comment type="subcellular location">
    <subcellularLocation>
        <location evidence="1">Cytoplasm</location>
    </subcellularLocation>
</comment>
<comment type="similarity">
    <text evidence="1">Belongs to the Maf family. YhdE subfamily.</text>
</comment>
<keyword id="KW-0963">Cytoplasm</keyword>
<keyword id="KW-0378">Hydrolase</keyword>
<keyword id="KW-0546">Nucleotide metabolism</keyword>
<keyword id="KW-1185">Reference proteome</keyword>
<sequence length="189" mass="20711">MTNAVYLASASPRRKELLTQLGIEFTQFSVDADESQLPNELPYDYVERLARLKAQSGVALGYTDRPVLGSDTVVVIDNQSLGKPCDENDFTHTLKRLSGNTHQVLTAVAFATTDKVLSCVVSTNVTFKTLSDDEIHTYWQSGEPQDKAGGYGIQGLGGRFVTHISGSYFAVVGLPLYETEQLLQTFLRG</sequence>
<feature type="chain" id="PRO_0000267377" description="dTTP/UTP pyrophosphatase">
    <location>
        <begin position="1"/>
        <end position="189"/>
    </location>
</feature>
<feature type="active site" description="Proton acceptor" evidence="1">
    <location>
        <position position="71"/>
    </location>
</feature>
<feature type="site" description="Important for substrate specificity" evidence="1">
    <location>
        <position position="13"/>
    </location>
</feature>
<feature type="site" description="Important for substrate specificity" evidence="1">
    <location>
        <position position="72"/>
    </location>
</feature>
<feature type="site" description="Important for substrate specificity" evidence="1">
    <location>
        <position position="154"/>
    </location>
</feature>
<reference key="1">
    <citation type="journal article" date="2005" name="Genome Res.">
        <title>Coping with cold: the genome of the versatile marine Antarctica bacterium Pseudoalteromonas haloplanktis TAC125.</title>
        <authorList>
            <person name="Medigue C."/>
            <person name="Krin E."/>
            <person name="Pascal G."/>
            <person name="Barbe V."/>
            <person name="Bernsel A."/>
            <person name="Bertin P.N."/>
            <person name="Cheung F."/>
            <person name="Cruveiller S."/>
            <person name="D'Amico S."/>
            <person name="Duilio A."/>
            <person name="Fang G."/>
            <person name="Feller G."/>
            <person name="Ho C."/>
            <person name="Mangenot S."/>
            <person name="Marino G."/>
            <person name="Nilsson J."/>
            <person name="Parrilli E."/>
            <person name="Rocha E.P.C."/>
            <person name="Rouy Z."/>
            <person name="Sekowska A."/>
            <person name="Tutino M.L."/>
            <person name="Vallenet D."/>
            <person name="von Heijne G."/>
            <person name="Danchin A."/>
        </authorList>
    </citation>
    <scope>NUCLEOTIDE SEQUENCE [LARGE SCALE GENOMIC DNA]</scope>
    <source>
        <strain>TAC 125</strain>
    </source>
</reference>
<name>NTPPA_PSET1</name>
<evidence type="ECO:0000255" key="1">
    <source>
        <dbReference type="HAMAP-Rule" id="MF_00528"/>
    </source>
</evidence>
<gene>
    <name type="ordered locus">PSHAa2679</name>
</gene>
<organism>
    <name type="scientific">Pseudoalteromonas translucida (strain TAC 125)</name>
    <dbReference type="NCBI Taxonomy" id="326442"/>
    <lineage>
        <taxon>Bacteria</taxon>
        <taxon>Pseudomonadati</taxon>
        <taxon>Pseudomonadota</taxon>
        <taxon>Gammaproteobacteria</taxon>
        <taxon>Alteromonadales</taxon>
        <taxon>Pseudoalteromonadaceae</taxon>
        <taxon>Pseudoalteromonas</taxon>
    </lineage>
</organism>